<comment type="similarity">
    <text evidence="1">Belongs to the bacterial ribosomal protein bS21 family.</text>
</comment>
<dbReference type="EMBL" id="CP000521">
    <property type="protein sequence ID" value="ABO12668.2"/>
    <property type="molecule type" value="Genomic_DNA"/>
</dbReference>
<dbReference type="RefSeq" id="WP_001136722.1">
    <property type="nucleotide sequence ID" value="NZ_CP053098.1"/>
</dbReference>
<dbReference type="SMR" id="A3M6X4"/>
<dbReference type="GeneID" id="97425938"/>
<dbReference type="KEGG" id="acb:A1S_2245"/>
<dbReference type="HOGENOM" id="CLU_159258_1_0_6"/>
<dbReference type="GO" id="GO:1990904">
    <property type="term" value="C:ribonucleoprotein complex"/>
    <property type="evidence" value="ECO:0007669"/>
    <property type="project" value="UniProtKB-KW"/>
</dbReference>
<dbReference type="GO" id="GO:0005840">
    <property type="term" value="C:ribosome"/>
    <property type="evidence" value="ECO:0007669"/>
    <property type="project" value="UniProtKB-KW"/>
</dbReference>
<dbReference type="GO" id="GO:0003735">
    <property type="term" value="F:structural constituent of ribosome"/>
    <property type="evidence" value="ECO:0007669"/>
    <property type="project" value="InterPro"/>
</dbReference>
<dbReference type="GO" id="GO:0006412">
    <property type="term" value="P:translation"/>
    <property type="evidence" value="ECO:0007669"/>
    <property type="project" value="UniProtKB-UniRule"/>
</dbReference>
<dbReference type="Gene3D" id="1.20.5.1150">
    <property type="entry name" value="Ribosomal protein S8"/>
    <property type="match status" value="1"/>
</dbReference>
<dbReference type="HAMAP" id="MF_00358">
    <property type="entry name" value="Ribosomal_bS21"/>
    <property type="match status" value="1"/>
</dbReference>
<dbReference type="InterPro" id="IPR001911">
    <property type="entry name" value="Ribosomal_bS21"/>
</dbReference>
<dbReference type="InterPro" id="IPR018278">
    <property type="entry name" value="Ribosomal_bS21_CS"/>
</dbReference>
<dbReference type="InterPro" id="IPR038380">
    <property type="entry name" value="Ribosomal_bS21_sf"/>
</dbReference>
<dbReference type="NCBIfam" id="TIGR00030">
    <property type="entry name" value="S21p"/>
    <property type="match status" value="1"/>
</dbReference>
<dbReference type="PANTHER" id="PTHR21109">
    <property type="entry name" value="MITOCHONDRIAL 28S RIBOSOMAL PROTEIN S21"/>
    <property type="match status" value="1"/>
</dbReference>
<dbReference type="PANTHER" id="PTHR21109:SF22">
    <property type="entry name" value="SMALL RIBOSOMAL SUBUNIT PROTEIN BS21"/>
    <property type="match status" value="1"/>
</dbReference>
<dbReference type="Pfam" id="PF01165">
    <property type="entry name" value="Ribosomal_S21"/>
    <property type="match status" value="1"/>
</dbReference>
<dbReference type="PRINTS" id="PR00976">
    <property type="entry name" value="RIBOSOMALS21"/>
</dbReference>
<dbReference type="PROSITE" id="PS01181">
    <property type="entry name" value="RIBOSOMAL_S21"/>
    <property type="match status" value="1"/>
</dbReference>
<reference key="1">
    <citation type="journal article" date="2007" name="Genes Dev.">
        <title>New insights into Acinetobacter baumannii pathogenesis revealed by high-density pyrosequencing and transposon mutagenesis.</title>
        <authorList>
            <person name="Smith M.G."/>
            <person name="Gianoulis T.A."/>
            <person name="Pukatzki S."/>
            <person name="Mekalanos J.J."/>
            <person name="Ornston L.N."/>
            <person name="Gerstein M."/>
            <person name="Snyder M."/>
        </authorList>
    </citation>
    <scope>NUCLEOTIDE SEQUENCE [LARGE SCALE GENOMIC DNA]</scope>
    <source>
        <strain>ATCC 17978 / DSM 105126 / CIP 53.77 / LMG 1025 / NCDC KC755 / 5377</strain>
    </source>
</reference>
<gene>
    <name evidence="1" type="primary">rpsU</name>
    <name type="ordered locus">A1S_2245</name>
</gene>
<evidence type="ECO:0000255" key="1">
    <source>
        <dbReference type="HAMAP-Rule" id="MF_00358"/>
    </source>
</evidence>
<evidence type="ECO:0000305" key="2"/>
<sequence>MPQVKLKEGEPVDVAIRRFKRSCEKAGVLADVRKREFYEKPTQERKRKKAAAVKRYQKKLARESVRTTRLY</sequence>
<proteinExistence type="inferred from homology"/>
<name>RS21_ACIBT</name>
<feature type="chain" id="PRO_1000120573" description="Small ribosomal subunit protein bS21">
    <location>
        <begin position="1"/>
        <end position="71"/>
    </location>
</feature>
<protein>
    <recommendedName>
        <fullName evidence="1">Small ribosomal subunit protein bS21</fullName>
    </recommendedName>
    <alternativeName>
        <fullName evidence="2">30S ribosomal protein S21</fullName>
    </alternativeName>
</protein>
<accession>A3M6X4</accession>
<keyword id="KW-0687">Ribonucleoprotein</keyword>
<keyword id="KW-0689">Ribosomal protein</keyword>
<organism>
    <name type="scientific">Acinetobacter baumannii (strain ATCC 17978 / DSM 105126 / CIP 53.77 / LMG 1025 / NCDC KC755 / 5377)</name>
    <dbReference type="NCBI Taxonomy" id="400667"/>
    <lineage>
        <taxon>Bacteria</taxon>
        <taxon>Pseudomonadati</taxon>
        <taxon>Pseudomonadota</taxon>
        <taxon>Gammaproteobacteria</taxon>
        <taxon>Moraxellales</taxon>
        <taxon>Moraxellaceae</taxon>
        <taxon>Acinetobacter</taxon>
        <taxon>Acinetobacter calcoaceticus/baumannii complex</taxon>
    </lineage>
</organism>